<protein>
    <recommendedName>
        <fullName>26S proteasome non-ATPase regulatory subunit 13</fullName>
    </recommendedName>
    <alternativeName>
        <fullName>26S proteasome regulatory subunit RPN9</fullName>
    </alternativeName>
    <alternativeName>
        <fullName>26S proteasome regulatory subunit S11</fullName>
    </alternativeName>
    <alternativeName>
        <fullName>26S proteasome regulatory subunit p40.5</fullName>
    </alternativeName>
</protein>
<feature type="chain" id="PRO_0000223482" description="26S proteasome non-ATPase regulatory subunit 13" evidence="6">
    <location>
        <begin position="1"/>
        <end position="376"/>
    </location>
</feature>
<feature type="domain" description="PCI" evidence="2">
    <location>
        <begin position="171"/>
        <end position="338"/>
    </location>
</feature>
<evidence type="ECO:0000250" key="1">
    <source>
        <dbReference type="UniProtKB" id="Q9UNM6"/>
    </source>
</evidence>
<evidence type="ECO:0000255" key="2">
    <source>
        <dbReference type="PROSITE-ProRule" id="PRU01185"/>
    </source>
</evidence>
<evidence type="ECO:0000269" key="3">
    <source>
    </source>
</evidence>
<evidence type="ECO:0000269" key="4">
    <source>
    </source>
</evidence>
<evidence type="ECO:0000269" key="5">
    <source>
    </source>
</evidence>
<evidence type="ECO:0000305" key="6"/>
<gene>
    <name evidence="1" type="primary">PSMD13</name>
</gene>
<organism>
    <name type="scientific">Gallus gallus</name>
    <name type="common">Chicken</name>
    <dbReference type="NCBI Taxonomy" id="9031"/>
    <lineage>
        <taxon>Eukaryota</taxon>
        <taxon>Metazoa</taxon>
        <taxon>Chordata</taxon>
        <taxon>Craniata</taxon>
        <taxon>Vertebrata</taxon>
        <taxon>Euteleostomi</taxon>
        <taxon>Archelosauria</taxon>
        <taxon>Archosauria</taxon>
        <taxon>Dinosauria</taxon>
        <taxon>Saurischia</taxon>
        <taxon>Theropoda</taxon>
        <taxon>Coelurosauria</taxon>
        <taxon>Aves</taxon>
        <taxon>Neognathae</taxon>
        <taxon>Galloanserae</taxon>
        <taxon>Galliformes</taxon>
        <taxon>Phasianidae</taxon>
        <taxon>Phasianinae</taxon>
        <taxon>Gallus</taxon>
    </lineage>
</organism>
<sequence>MKDVPGFLQQSQSAGPGQAAVWHRLEELYNKKLWHQLTLQVLDFVQDPCFAQGDGLIKLYENFISEFEHRVNPLSLVEIILHVVRQMTDPTVALTFLEKTREKVKSSDEAVILCKTAIGALKLNIGDLQVTKETIEEVEEMLNNLPGVTSVHSRFYDLSSKYYQTIGNHASYYKDALRFLGCIDVKDLPVSEQQERAFTLGLAGLLGEGVYNFGELLMHPVLESLRSTDRQWLIDTLYAFNSGNVETFQALKSAWGQQPDLAANEALLLQKIQLLCLMEMTFTRPANHRQLTFEEIAKSAKVTVNEVELLVMKALSVGLVKGSIDEVDKRVHMTWVQPRVLDLQQIKGMKDRLEFWCTDVRSMEMLVEHQAHDILT</sequence>
<accession>P84169</accession>
<reference evidence="6" key="1">
    <citation type="submission" date="2003-01" db="EMBL/GenBank/DDBJ databases">
        <title>Chicken ESTs from lymphoid tissue.</title>
        <authorList>
            <person name="Morgan R.W."/>
            <person name="Burnside J."/>
        </authorList>
    </citation>
    <scope>NUCLEOTIDE SEQUENCE [LARGE SCALE MRNA] OF 1-180</scope>
</reference>
<reference evidence="6" key="2">
    <citation type="journal article" date="2005" name="Cytogenet. Genome Res.">
        <title>ESTs from brain and testis of White Leghorn and red junglefowl: annotation, bioinformatic classification of unknown transcripts and analysis of expression levels.</title>
        <authorList>
            <person name="Savolainen P."/>
            <person name="Fitzsimmons C."/>
            <person name="Arvestad L."/>
            <person name="Andersson L."/>
            <person name="Lundeberg J."/>
        </authorList>
    </citation>
    <scope>NUCLEOTIDE SEQUENCE [LARGE SCALE MRNA] OF 88-336</scope>
    <source>
        <strain evidence="4">Red jungle fowl</strain>
        <tissue evidence="4">Brain</tissue>
    </source>
</reference>
<reference evidence="6" key="3">
    <citation type="journal article" date="2002" name="Curr. Biol.">
        <title>A comprehensive collection of chicken cDNAs.</title>
        <authorList>
            <person name="Boardman P.E."/>
            <person name="Sanz-Ezquerro J."/>
            <person name="Overton I.M."/>
            <person name="Burt D.W."/>
            <person name="Bosch E."/>
            <person name="Fong W.T."/>
            <person name="Tickle C."/>
            <person name="Brown W.R."/>
            <person name="Wilson S.A."/>
            <person name="Hubbard S.J."/>
        </authorList>
    </citation>
    <scope>NUCLEOTIDE SEQUENCE [LARGE SCALE MRNA] OF 246-376</scope>
    <source>
        <tissue evidence="3">Chondrocyte</tissue>
    </source>
</reference>
<reference evidence="6" key="4">
    <citation type="journal article" date="2005" name="Proteomics">
        <title>Proteomic analysis of the Gallus gallus embryo at stage-29 of development.</title>
        <authorList>
            <person name="Agudo D."/>
            <person name="Gomez-Esquer F."/>
            <person name="Diaz-Gil G."/>
            <person name="Martinez-Arribas F."/>
            <person name="Delcan J."/>
            <person name="Schneider J."/>
            <person name="Palomar M.A."/>
            <person name="Linares R."/>
        </authorList>
    </citation>
    <scope>IDENTIFICATION</scope>
    <scope>MASS SPECTROMETRY</scope>
    <source>
        <tissue evidence="5">Embryo</tissue>
    </source>
</reference>
<proteinExistence type="evidence at protein level"/>
<dbReference type="EMBL" id="CB017092">
    <property type="status" value="NOT_ANNOTATED_CDS"/>
    <property type="molecule type" value="mRNA"/>
</dbReference>
<dbReference type="EMBL" id="CN218176">
    <property type="status" value="NOT_ANNOTATED_CDS"/>
    <property type="molecule type" value="mRNA"/>
</dbReference>
<dbReference type="EMBL" id="BU427099">
    <property type="status" value="NOT_ANNOTATED_CDS"/>
    <property type="molecule type" value="mRNA"/>
</dbReference>
<dbReference type="RefSeq" id="XP_015141752.1">
    <property type="nucleotide sequence ID" value="XM_015286266.4"/>
</dbReference>
<dbReference type="RefSeq" id="XP_040528571.1">
    <property type="nucleotide sequence ID" value="XM_040672637.2"/>
</dbReference>
<dbReference type="SMR" id="P84169"/>
<dbReference type="FunCoup" id="P84169">
    <property type="interactions" value="3430"/>
</dbReference>
<dbReference type="STRING" id="9031.ENSGALP00000054631"/>
<dbReference type="PaxDb" id="9031-ENSGALP00000039552"/>
<dbReference type="Ensembl" id="ENSGALT00010050505.1">
    <property type="protein sequence ID" value="ENSGALP00010029810.1"/>
    <property type="gene ID" value="ENSGALG00010020894.1"/>
</dbReference>
<dbReference type="GeneID" id="422990"/>
<dbReference type="KEGG" id="gga:422990"/>
<dbReference type="CTD" id="5719"/>
<dbReference type="VEuPathDB" id="HostDB:geneid_422990"/>
<dbReference type="eggNOG" id="KOG2908">
    <property type="taxonomic scope" value="Eukaryota"/>
</dbReference>
<dbReference type="GeneTree" id="ENSGT00390000001802"/>
<dbReference type="InParanoid" id="P84169"/>
<dbReference type="OMA" id="SFEDYWE"/>
<dbReference type="OrthoDB" id="1093at2759"/>
<dbReference type="PhylomeDB" id="P84169"/>
<dbReference type="Reactome" id="R-GGA-1169091">
    <property type="pathway name" value="Activation of NF-kappaB in B cells"/>
</dbReference>
<dbReference type="Reactome" id="R-GGA-1234176">
    <property type="pathway name" value="Oxygen-dependent proline hydroxylation of Hypoxia-inducible Factor Alpha"/>
</dbReference>
<dbReference type="Reactome" id="R-GGA-1236978">
    <property type="pathway name" value="Cross-presentation of soluble exogenous antigens (endosomes)"/>
</dbReference>
<dbReference type="Reactome" id="R-GGA-174084">
    <property type="pathway name" value="Autodegradation of Cdh1 by Cdh1:APC/C"/>
</dbReference>
<dbReference type="Reactome" id="R-GGA-174154">
    <property type="pathway name" value="APC/C:Cdc20 mediated degradation of Securin"/>
</dbReference>
<dbReference type="Reactome" id="R-GGA-174178">
    <property type="pathway name" value="APC/C:Cdh1 mediated degradation of Cdc20 and other APC/C:Cdh1 targeted proteins in late mitosis/early G1"/>
</dbReference>
<dbReference type="Reactome" id="R-GGA-174184">
    <property type="pathway name" value="Cdc20:Phospho-APC/C mediated degradation of Cyclin A"/>
</dbReference>
<dbReference type="Reactome" id="R-GGA-187577">
    <property type="pathway name" value="SCF(Skp2)-mediated degradation of p27/p21"/>
</dbReference>
<dbReference type="Reactome" id="R-GGA-195253">
    <property type="pathway name" value="Degradation of beta-catenin by the destruction complex"/>
</dbReference>
<dbReference type="Reactome" id="R-GGA-202424">
    <property type="pathway name" value="Downstream TCR signaling"/>
</dbReference>
<dbReference type="Reactome" id="R-GGA-2467813">
    <property type="pathway name" value="Separation of Sister Chromatids"/>
</dbReference>
<dbReference type="Reactome" id="R-GGA-2871837">
    <property type="pathway name" value="FCERI mediated NF-kB activation"/>
</dbReference>
<dbReference type="Reactome" id="R-GGA-349425">
    <property type="pathway name" value="Autodegradation of the E3 ubiquitin ligase COP1"/>
</dbReference>
<dbReference type="Reactome" id="R-GGA-350562">
    <property type="pathway name" value="Regulation of ornithine decarboxylase (ODC)"/>
</dbReference>
<dbReference type="Reactome" id="R-GGA-382556">
    <property type="pathway name" value="ABC-family proteins mediated transport"/>
</dbReference>
<dbReference type="Reactome" id="R-GGA-450408">
    <property type="pathway name" value="AUF1 (hnRNP D0) binds and destabilizes mRNA"/>
</dbReference>
<dbReference type="Reactome" id="R-GGA-4608870">
    <property type="pathway name" value="Asymmetric localization of PCP proteins"/>
</dbReference>
<dbReference type="Reactome" id="R-GGA-4641257">
    <property type="pathway name" value="Degradation of AXIN"/>
</dbReference>
<dbReference type="Reactome" id="R-GGA-4641258">
    <property type="pathway name" value="Degradation of DVL"/>
</dbReference>
<dbReference type="Reactome" id="R-GGA-5358346">
    <property type="pathway name" value="Hedgehog ligand biogenesis"/>
</dbReference>
<dbReference type="Reactome" id="R-GGA-5607764">
    <property type="pathway name" value="CLEC7A (Dectin-1) signaling"/>
</dbReference>
<dbReference type="Reactome" id="R-GGA-5610780">
    <property type="pathway name" value="Degradation of GLI1 by the proteasome"/>
</dbReference>
<dbReference type="Reactome" id="R-GGA-5610785">
    <property type="pathway name" value="GLI3 is processed to GLI3R by the proteasome"/>
</dbReference>
<dbReference type="Reactome" id="R-GGA-5632684">
    <property type="pathway name" value="Hedgehog 'on' state"/>
</dbReference>
<dbReference type="Reactome" id="R-GGA-5658442">
    <property type="pathway name" value="Regulation of RAS by GAPs"/>
</dbReference>
<dbReference type="Reactome" id="R-GGA-5668541">
    <property type="pathway name" value="TNFR2 non-canonical NF-kB pathway"/>
</dbReference>
<dbReference type="Reactome" id="R-GGA-5687128">
    <property type="pathway name" value="MAPK6/MAPK4 signaling"/>
</dbReference>
<dbReference type="Reactome" id="R-GGA-5689603">
    <property type="pathway name" value="UCH proteinases"/>
</dbReference>
<dbReference type="Reactome" id="R-GGA-5689880">
    <property type="pathway name" value="Ub-specific processing proteases"/>
</dbReference>
<dbReference type="Reactome" id="R-GGA-6798695">
    <property type="pathway name" value="Neutrophil degranulation"/>
</dbReference>
<dbReference type="Reactome" id="R-GGA-68867">
    <property type="pathway name" value="Assembly of the pre-replicative complex"/>
</dbReference>
<dbReference type="Reactome" id="R-GGA-68949">
    <property type="pathway name" value="Orc1 removal from chromatin"/>
</dbReference>
<dbReference type="Reactome" id="R-GGA-69017">
    <property type="pathway name" value="CDK-mediated phosphorylation and removal of Cdc6"/>
</dbReference>
<dbReference type="Reactome" id="R-GGA-69601">
    <property type="pathway name" value="Ubiquitin Mediated Degradation of Phosphorylated Cdc25A"/>
</dbReference>
<dbReference type="Reactome" id="R-GGA-75815">
    <property type="pathway name" value="Ubiquitin-dependent degradation of Cyclin D"/>
</dbReference>
<dbReference type="Reactome" id="R-GGA-8854050">
    <property type="pathway name" value="FBXL7 down-regulates AURKA during mitotic entry and in early mitosis"/>
</dbReference>
<dbReference type="Reactome" id="R-GGA-8939236">
    <property type="pathway name" value="RUNX1 regulates transcription of genes involved in differentiation of HSCs"/>
</dbReference>
<dbReference type="Reactome" id="R-GGA-8939902">
    <property type="pathway name" value="Regulation of RUNX2 expression and activity"/>
</dbReference>
<dbReference type="Reactome" id="R-GGA-8941858">
    <property type="pathway name" value="Regulation of RUNX3 expression and activity"/>
</dbReference>
<dbReference type="Reactome" id="R-GGA-8948751">
    <property type="pathway name" value="Regulation of PTEN stability and activity"/>
</dbReference>
<dbReference type="Reactome" id="R-GGA-8951664">
    <property type="pathway name" value="Neddylation"/>
</dbReference>
<dbReference type="Reactome" id="R-GGA-9020702">
    <property type="pathway name" value="Interleukin-1 signaling"/>
</dbReference>
<dbReference type="Reactome" id="R-GGA-9755511">
    <property type="pathway name" value="KEAP1-NFE2L2 pathway"/>
</dbReference>
<dbReference type="Reactome" id="R-GGA-9762114">
    <property type="pathway name" value="GSK3B and BTRC:CUL1-mediated-degradation of NFE2L2"/>
</dbReference>
<dbReference type="Reactome" id="R-GGA-983168">
    <property type="pathway name" value="Antigen processing: Ubiquitination &amp; Proteasome degradation"/>
</dbReference>
<dbReference type="Reactome" id="R-GGA-9907900">
    <property type="pathway name" value="Proteasome assembly"/>
</dbReference>
<dbReference type="PRO" id="PR:P84169"/>
<dbReference type="Proteomes" id="UP000000539">
    <property type="component" value="Chromosome 5"/>
</dbReference>
<dbReference type="Bgee" id="ENSGALG00000043684">
    <property type="expression patterns" value="Expressed in muscle tissue and 14 other cell types or tissues"/>
</dbReference>
<dbReference type="GO" id="GO:0005829">
    <property type="term" value="C:cytosol"/>
    <property type="evidence" value="ECO:0000318"/>
    <property type="project" value="GO_Central"/>
</dbReference>
<dbReference type="GO" id="GO:0005634">
    <property type="term" value="C:nucleus"/>
    <property type="evidence" value="ECO:0000318"/>
    <property type="project" value="GO_Central"/>
</dbReference>
<dbReference type="GO" id="GO:0022624">
    <property type="term" value="C:proteasome accessory complex"/>
    <property type="evidence" value="ECO:0000250"/>
    <property type="project" value="UniProtKB"/>
</dbReference>
<dbReference type="GO" id="GO:0008541">
    <property type="term" value="C:proteasome regulatory particle, lid subcomplex"/>
    <property type="evidence" value="ECO:0000318"/>
    <property type="project" value="GO_Central"/>
</dbReference>
<dbReference type="GO" id="GO:0005198">
    <property type="term" value="F:structural molecule activity"/>
    <property type="evidence" value="ECO:0000318"/>
    <property type="project" value="GO_Central"/>
</dbReference>
<dbReference type="GO" id="GO:0006511">
    <property type="term" value="P:ubiquitin-dependent protein catabolic process"/>
    <property type="evidence" value="ECO:0000318"/>
    <property type="project" value="GO_Central"/>
</dbReference>
<dbReference type="InterPro" id="IPR000717">
    <property type="entry name" value="PCI_dom"/>
</dbReference>
<dbReference type="InterPro" id="IPR054179">
    <property type="entry name" value="PSD13_N"/>
</dbReference>
<dbReference type="InterPro" id="IPR035298">
    <property type="entry name" value="PSMD13"/>
</dbReference>
<dbReference type="InterPro" id="IPR036390">
    <property type="entry name" value="WH_DNA-bd_sf"/>
</dbReference>
<dbReference type="PANTHER" id="PTHR10539">
    <property type="entry name" value="26S PROTEASOME NON-ATPASE REGULATORY SUBUNIT 13"/>
    <property type="match status" value="1"/>
</dbReference>
<dbReference type="PANTHER" id="PTHR10539:SF0">
    <property type="entry name" value="26S PROTEASOME NON-ATPASE REGULATORY SUBUNIT 13"/>
    <property type="match status" value="1"/>
</dbReference>
<dbReference type="Pfam" id="PF01399">
    <property type="entry name" value="PCI"/>
    <property type="match status" value="1"/>
</dbReference>
<dbReference type="Pfam" id="PF22037">
    <property type="entry name" value="PSD13_N"/>
    <property type="match status" value="1"/>
</dbReference>
<dbReference type="SMART" id="SM00088">
    <property type="entry name" value="PINT"/>
    <property type="match status" value="1"/>
</dbReference>
<dbReference type="SUPFAM" id="SSF46785">
    <property type="entry name" value="Winged helix' DNA-binding domain"/>
    <property type="match status" value="1"/>
</dbReference>
<dbReference type="PROSITE" id="PS50250">
    <property type="entry name" value="PCI"/>
    <property type="match status" value="1"/>
</dbReference>
<keyword id="KW-0647">Proteasome</keyword>
<keyword id="KW-1185">Reference proteome</keyword>
<comment type="function">
    <text evidence="1">Component of the 26S proteasome, a multiprotein complex involved in the ATP-dependent degradation of ubiquitinated proteins. This complex plays a key role in the maintenance of protein homeostasis by removing misfolded or damaged proteins, which could impair cellular functions, and by removing proteins whose functions are no longer required. Therefore, the proteasome participates in numerous cellular processes, including cell cycle progression, apoptosis, or DNA damage repair.</text>
</comment>
<comment type="subunit">
    <text evidence="1">Component of the 19S proteasome regulatory particle complex. The 26S proteasome consists of a 20S core particle (CP) and two 19S regulatory subunits (RP). The regulatory particle is made of a lid composed of 9 subunits including PSMD13, a base containing 6 ATPases and few additional components.</text>
</comment>
<comment type="mass spectrometry"/>
<comment type="similarity">
    <text evidence="6">Belongs to the proteasome subunit S11 family.</text>
</comment>
<name>PSD13_CHICK</name>